<protein>
    <recommendedName>
        <fullName>Protein kinase C alpha type</fullName>
        <shortName>PKC-A</shortName>
        <shortName>PKC-alpha</shortName>
        <ecNumber evidence="5">2.7.11.13</ecNumber>
    </recommendedName>
</protein>
<dbReference type="EC" id="2.7.11.13" evidence="5"/>
<dbReference type="EMBL" id="X04796">
    <property type="protein sequence ID" value="CAA28483.1"/>
    <property type="molecule type" value="mRNA"/>
</dbReference>
<dbReference type="PIR" id="C26037">
    <property type="entry name" value="KIRBC"/>
</dbReference>
<dbReference type="RefSeq" id="NP_001095194.1">
    <property type="nucleotide sequence ID" value="NM_001101724.1"/>
</dbReference>
<dbReference type="SMR" id="P10102"/>
<dbReference type="FunCoup" id="P10102">
    <property type="interactions" value="129"/>
</dbReference>
<dbReference type="STRING" id="9986.ENSOCUP00000025402"/>
<dbReference type="SwissPalm" id="P10102"/>
<dbReference type="PaxDb" id="9986-ENSOCUP00000025402"/>
<dbReference type="GeneID" id="100037720"/>
<dbReference type="KEGG" id="ocu:100037720"/>
<dbReference type="CTD" id="5578"/>
<dbReference type="eggNOG" id="KOG0696">
    <property type="taxonomic scope" value="Eukaryota"/>
</dbReference>
<dbReference type="InParanoid" id="P10102"/>
<dbReference type="OrthoDB" id="63267at2759"/>
<dbReference type="BRENDA" id="2.7.11.13">
    <property type="organism ID" value="1749"/>
</dbReference>
<dbReference type="Proteomes" id="UP000001811">
    <property type="component" value="Unplaced"/>
</dbReference>
<dbReference type="GO" id="GO:0005737">
    <property type="term" value="C:cytoplasm"/>
    <property type="evidence" value="ECO:0000250"/>
    <property type="project" value="UniProtKB"/>
</dbReference>
<dbReference type="GO" id="GO:0005829">
    <property type="term" value="C:cytosol"/>
    <property type="evidence" value="ECO:0000250"/>
    <property type="project" value="UniProtKB"/>
</dbReference>
<dbReference type="GO" id="GO:0031966">
    <property type="term" value="C:mitochondrial membrane"/>
    <property type="evidence" value="ECO:0007669"/>
    <property type="project" value="UniProtKB-SubCell"/>
</dbReference>
<dbReference type="GO" id="GO:0005634">
    <property type="term" value="C:nucleus"/>
    <property type="evidence" value="ECO:0007669"/>
    <property type="project" value="UniProtKB-SubCell"/>
</dbReference>
<dbReference type="GO" id="GO:0048471">
    <property type="term" value="C:perinuclear region of cytoplasm"/>
    <property type="evidence" value="ECO:0000250"/>
    <property type="project" value="UniProtKB"/>
</dbReference>
<dbReference type="GO" id="GO:0005886">
    <property type="term" value="C:plasma membrane"/>
    <property type="evidence" value="ECO:0000250"/>
    <property type="project" value="UniProtKB"/>
</dbReference>
<dbReference type="GO" id="GO:0005524">
    <property type="term" value="F:ATP binding"/>
    <property type="evidence" value="ECO:0007669"/>
    <property type="project" value="UniProtKB-KW"/>
</dbReference>
<dbReference type="GO" id="GO:0004698">
    <property type="term" value="F:calcium,diacylglycerol-dependent serine/threonine kinase activity"/>
    <property type="evidence" value="ECO:0000250"/>
    <property type="project" value="UniProtKB"/>
</dbReference>
<dbReference type="GO" id="GO:0106310">
    <property type="term" value="F:protein serine kinase activity"/>
    <property type="evidence" value="ECO:0007669"/>
    <property type="project" value="RHEA"/>
</dbReference>
<dbReference type="GO" id="GO:0008270">
    <property type="term" value="F:zinc ion binding"/>
    <property type="evidence" value="ECO:0007669"/>
    <property type="project" value="UniProtKB-KW"/>
</dbReference>
<dbReference type="GO" id="GO:0001525">
    <property type="term" value="P:angiogenesis"/>
    <property type="evidence" value="ECO:0007669"/>
    <property type="project" value="UniProtKB-KW"/>
</dbReference>
<dbReference type="GO" id="GO:0006915">
    <property type="term" value="P:apoptotic process"/>
    <property type="evidence" value="ECO:0007669"/>
    <property type="project" value="UniProtKB-KW"/>
</dbReference>
<dbReference type="GO" id="GO:0007155">
    <property type="term" value="P:cell adhesion"/>
    <property type="evidence" value="ECO:0007669"/>
    <property type="project" value="UniProtKB-KW"/>
</dbReference>
<dbReference type="GO" id="GO:0034351">
    <property type="term" value="P:negative regulation of glial cell apoptotic process"/>
    <property type="evidence" value="ECO:0000250"/>
    <property type="project" value="UniProtKB"/>
</dbReference>
<dbReference type="GO" id="GO:0045766">
    <property type="term" value="P:positive regulation of angiogenesis"/>
    <property type="evidence" value="ECO:0000250"/>
    <property type="project" value="UniProtKB"/>
</dbReference>
<dbReference type="GO" id="GO:0010613">
    <property type="term" value="P:positive regulation of cardiac muscle hypertrophy"/>
    <property type="evidence" value="ECO:0000250"/>
    <property type="project" value="UniProtKB"/>
</dbReference>
<dbReference type="GO" id="GO:0045785">
    <property type="term" value="P:positive regulation of cell adhesion"/>
    <property type="evidence" value="ECO:0000250"/>
    <property type="project" value="UniProtKB"/>
</dbReference>
<dbReference type="GO" id="GO:0030335">
    <property type="term" value="P:positive regulation of cell migration"/>
    <property type="evidence" value="ECO:0000250"/>
    <property type="project" value="UniProtKB"/>
</dbReference>
<dbReference type="GO" id="GO:2000707">
    <property type="term" value="P:positive regulation of dense core granule biogenesis"/>
    <property type="evidence" value="ECO:0000250"/>
    <property type="project" value="UniProtKB"/>
</dbReference>
<dbReference type="GO" id="GO:0010595">
    <property type="term" value="P:positive regulation of endothelial cell migration"/>
    <property type="evidence" value="ECO:0000250"/>
    <property type="project" value="UniProtKB"/>
</dbReference>
<dbReference type="GO" id="GO:0001938">
    <property type="term" value="P:positive regulation of endothelial cell proliferation"/>
    <property type="evidence" value="ECO:0000250"/>
    <property type="project" value="UniProtKB"/>
</dbReference>
<dbReference type="GO" id="GO:0070374">
    <property type="term" value="P:positive regulation of ERK1 and ERK2 cascade"/>
    <property type="evidence" value="ECO:0000250"/>
    <property type="project" value="UniProtKB"/>
</dbReference>
<dbReference type="GO" id="GO:0031666">
    <property type="term" value="P:positive regulation of lipopolysaccharide-mediated signaling pathway"/>
    <property type="evidence" value="ECO:0000250"/>
    <property type="project" value="UniProtKB"/>
</dbReference>
<dbReference type="GO" id="GO:0045651">
    <property type="term" value="P:positive regulation of macrophage differentiation"/>
    <property type="evidence" value="ECO:0000250"/>
    <property type="project" value="UniProtKB"/>
</dbReference>
<dbReference type="GO" id="GO:0045931">
    <property type="term" value="P:positive regulation of mitotic cell cycle"/>
    <property type="evidence" value="ECO:0000250"/>
    <property type="project" value="UniProtKB"/>
</dbReference>
<dbReference type="GO" id="GO:0006468">
    <property type="term" value="P:protein phosphorylation"/>
    <property type="evidence" value="ECO:0000250"/>
    <property type="project" value="UniProtKB"/>
</dbReference>
<dbReference type="GO" id="GO:0090330">
    <property type="term" value="P:regulation of platelet aggregation"/>
    <property type="evidence" value="ECO:0000250"/>
    <property type="project" value="UniProtKB"/>
</dbReference>
<dbReference type="CDD" id="cd20833">
    <property type="entry name" value="C1_cPKC_rpt1"/>
    <property type="match status" value="1"/>
</dbReference>
<dbReference type="CDD" id="cd20836">
    <property type="entry name" value="C1_cPKC_rpt2"/>
    <property type="match status" value="1"/>
</dbReference>
<dbReference type="CDD" id="cd04026">
    <property type="entry name" value="C2_PKC_alpha_gamma"/>
    <property type="match status" value="1"/>
</dbReference>
<dbReference type="CDD" id="cd05615">
    <property type="entry name" value="STKc_cPKC_alpha"/>
    <property type="match status" value="1"/>
</dbReference>
<dbReference type="FunFam" id="2.60.40.150:FF:000012">
    <property type="entry name" value="Kinase C alpha type"/>
    <property type="match status" value="1"/>
</dbReference>
<dbReference type="FunFam" id="1.10.510.10:FF:000023">
    <property type="entry name" value="Protein kinase C"/>
    <property type="match status" value="1"/>
</dbReference>
<dbReference type="FunFam" id="3.30.200.20:FF:000080">
    <property type="entry name" value="Protein kinase C"/>
    <property type="match status" value="1"/>
</dbReference>
<dbReference type="FunFam" id="3.30.200.20:FF:000103">
    <property type="entry name" value="Protein kinase C"/>
    <property type="match status" value="1"/>
</dbReference>
<dbReference type="FunFam" id="3.30.60.20:FF:000006">
    <property type="entry name" value="Protein kinase C"/>
    <property type="match status" value="1"/>
</dbReference>
<dbReference type="FunFam" id="3.30.60.20:FF:000031">
    <property type="entry name" value="Protein kinase C alpha"/>
    <property type="match status" value="1"/>
</dbReference>
<dbReference type="Gene3D" id="3.30.60.20">
    <property type="match status" value="2"/>
</dbReference>
<dbReference type="Gene3D" id="2.60.40.150">
    <property type="entry name" value="C2 domain"/>
    <property type="match status" value="1"/>
</dbReference>
<dbReference type="Gene3D" id="3.30.200.20">
    <property type="entry name" value="Phosphorylase Kinase, domain 1"/>
    <property type="match status" value="2"/>
</dbReference>
<dbReference type="Gene3D" id="1.10.510.10">
    <property type="entry name" value="Transferase(Phosphotransferase) domain 1"/>
    <property type="match status" value="1"/>
</dbReference>
<dbReference type="InterPro" id="IPR000961">
    <property type="entry name" value="AGC-kinase_C"/>
</dbReference>
<dbReference type="InterPro" id="IPR046349">
    <property type="entry name" value="C1-like_sf"/>
</dbReference>
<dbReference type="InterPro" id="IPR000008">
    <property type="entry name" value="C2_dom"/>
</dbReference>
<dbReference type="InterPro" id="IPR035892">
    <property type="entry name" value="C2_domain_sf"/>
</dbReference>
<dbReference type="InterPro" id="IPR034663">
    <property type="entry name" value="cPKC_alpha"/>
</dbReference>
<dbReference type="InterPro" id="IPR020454">
    <property type="entry name" value="DAG/PE-bd"/>
</dbReference>
<dbReference type="InterPro" id="IPR011009">
    <property type="entry name" value="Kinase-like_dom_sf"/>
</dbReference>
<dbReference type="InterPro" id="IPR002219">
    <property type="entry name" value="PE/DAG-bd"/>
</dbReference>
<dbReference type="InterPro" id="IPR017892">
    <property type="entry name" value="Pkinase_C"/>
</dbReference>
<dbReference type="InterPro" id="IPR000719">
    <property type="entry name" value="Prot_kinase_dom"/>
</dbReference>
<dbReference type="InterPro" id="IPR017441">
    <property type="entry name" value="Protein_kinase_ATP_BS"/>
</dbReference>
<dbReference type="InterPro" id="IPR014375">
    <property type="entry name" value="Protein_kinase_C_a/b/g"/>
</dbReference>
<dbReference type="InterPro" id="IPR008271">
    <property type="entry name" value="Ser/Thr_kinase_AS"/>
</dbReference>
<dbReference type="PANTHER" id="PTHR24351">
    <property type="entry name" value="RIBOSOMAL PROTEIN S6 KINASE"/>
    <property type="match status" value="1"/>
</dbReference>
<dbReference type="Pfam" id="PF00130">
    <property type="entry name" value="C1_1"/>
    <property type="match status" value="2"/>
</dbReference>
<dbReference type="Pfam" id="PF00168">
    <property type="entry name" value="C2"/>
    <property type="match status" value="1"/>
</dbReference>
<dbReference type="Pfam" id="PF00069">
    <property type="entry name" value="Pkinase"/>
    <property type="match status" value="1"/>
</dbReference>
<dbReference type="Pfam" id="PF00433">
    <property type="entry name" value="Pkinase_C"/>
    <property type="match status" value="1"/>
</dbReference>
<dbReference type="PIRSF" id="PIRSF000550">
    <property type="entry name" value="PKC_alpha"/>
    <property type="match status" value="1"/>
</dbReference>
<dbReference type="PRINTS" id="PR00360">
    <property type="entry name" value="C2DOMAIN"/>
</dbReference>
<dbReference type="PRINTS" id="PR00008">
    <property type="entry name" value="DAGPEDOMAIN"/>
</dbReference>
<dbReference type="SMART" id="SM00109">
    <property type="entry name" value="C1"/>
    <property type="match status" value="2"/>
</dbReference>
<dbReference type="SMART" id="SM00239">
    <property type="entry name" value="C2"/>
    <property type="match status" value="1"/>
</dbReference>
<dbReference type="SMART" id="SM00133">
    <property type="entry name" value="S_TK_X"/>
    <property type="match status" value="1"/>
</dbReference>
<dbReference type="SMART" id="SM00220">
    <property type="entry name" value="S_TKc"/>
    <property type="match status" value="1"/>
</dbReference>
<dbReference type="SUPFAM" id="SSF49562">
    <property type="entry name" value="C2 domain (Calcium/lipid-binding domain, CaLB)"/>
    <property type="match status" value="1"/>
</dbReference>
<dbReference type="SUPFAM" id="SSF57889">
    <property type="entry name" value="Cysteine-rich domain"/>
    <property type="match status" value="2"/>
</dbReference>
<dbReference type="SUPFAM" id="SSF56112">
    <property type="entry name" value="Protein kinase-like (PK-like)"/>
    <property type="match status" value="1"/>
</dbReference>
<dbReference type="PROSITE" id="PS51285">
    <property type="entry name" value="AGC_KINASE_CTER"/>
    <property type="match status" value="1"/>
</dbReference>
<dbReference type="PROSITE" id="PS50004">
    <property type="entry name" value="C2"/>
    <property type="match status" value="1"/>
</dbReference>
<dbReference type="PROSITE" id="PS00107">
    <property type="entry name" value="PROTEIN_KINASE_ATP"/>
    <property type="match status" value="1"/>
</dbReference>
<dbReference type="PROSITE" id="PS50011">
    <property type="entry name" value="PROTEIN_KINASE_DOM"/>
    <property type="match status" value="1"/>
</dbReference>
<dbReference type="PROSITE" id="PS00108">
    <property type="entry name" value="PROTEIN_KINASE_ST"/>
    <property type="match status" value="1"/>
</dbReference>
<dbReference type="PROSITE" id="PS00479">
    <property type="entry name" value="ZF_DAG_PE_1"/>
    <property type="match status" value="2"/>
</dbReference>
<dbReference type="PROSITE" id="PS50081">
    <property type="entry name" value="ZF_DAG_PE_2"/>
    <property type="match status" value="2"/>
</dbReference>
<gene>
    <name type="primary">PRKCA</name>
</gene>
<feature type="initiator methionine" description="Removed" evidence="5">
    <location>
        <position position="1"/>
    </location>
</feature>
<feature type="chain" id="PRO_0000055681" description="Protein kinase C alpha type">
    <location>
        <begin position="2"/>
        <end position="672"/>
    </location>
</feature>
<feature type="domain" description="C2" evidence="7">
    <location>
        <begin position="158"/>
        <end position="275"/>
    </location>
</feature>
<feature type="domain" description="Protein kinase" evidence="8">
    <location>
        <begin position="339"/>
        <end position="597"/>
    </location>
</feature>
<feature type="domain" description="AGC-kinase C-terminal" evidence="10">
    <location>
        <begin position="598"/>
        <end position="668"/>
    </location>
</feature>
<feature type="zinc finger region" description="Phorbol-ester/DAG-type 1" evidence="9">
    <location>
        <begin position="36"/>
        <end position="86"/>
    </location>
</feature>
<feature type="zinc finger region" description="Phorbol-ester/DAG-type 2" evidence="9">
    <location>
        <begin position="101"/>
        <end position="151"/>
    </location>
</feature>
<feature type="active site" description="Proton acceptor" evidence="8 11">
    <location>
        <position position="463"/>
    </location>
</feature>
<feature type="binding site" evidence="3">
    <location>
        <position position="186"/>
    </location>
    <ligand>
        <name>Ca(2+)</name>
        <dbReference type="ChEBI" id="CHEBI:29108"/>
        <label>1</label>
    </ligand>
</feature>
<feature type="binding site" evidence="3">
    <location>
        <position position="187"/>
    </location>
    <ligand>
        <name>Ca(2+)</name>
        <dbReference type="ChEBI" id="CHEBI:29108"/>
        <label>1</label>
    </ligand>
</feature>
<feature type="binding site" evidence="3">
    <location>
        <position position="187"/>
    </location>
    <ligand>
        <name>Ca(2+)</name>
        <dbReference type="ChEBI" id="CHEBI:29108"/>
        <label>2</label>
    </ligand>
</feature>
<feature type="binding site" evidence="3">
    <location>
        <position position="193"/>
    </location>
    <ligand>
        <name>Ca(2+)</name>
        <dbReference type="ChEBI" id="CHEBI:29108"/>
        <label>2</label>
    </ligand>
</feature>
<feature type="binding site" evidence="3">
    <location>
        <position position="195"/>
    </location>
    <ligand>
        <name>a 1,2-diacyl-sn-glycero-3-phospho-(1D-myo-inositol-4,5-bisphosphate)</name>
        <dbReference type="ChEBI" id="CHEBI:58456"/>
    </ligand>
</feature>
<feature type="binding site" evidence="3">
    <location>
        <position position="245"/>
    </location>
    <ligand>
        <name>a 1,2-diacyl-sn-glycero-3-phospho-(1D-myo-inositol-4,5-bisphosphate)</name>
        <dbReference type="ChEBI" id="CHEBI:58456"/>
    </ligand>
</feature>
<feature type="binding site" evidence="3">
    <location>
        <position position="246"/>
    </location>
    <ligand>
        <name>Ca(2+)</name>
        <dbReference type="ChEBI" id="CHEBI:29108"/>
        <label>1</label>
    </ligand>
</feature>
<feature type="binding site" evidence="3">
    <location>
        <position position="246"/>
    </location>
    <ligand>
        <name>Ca(2+)</name>
        <dbReference type="ChEBI" id="CHEBI:29108"/>
        <label>2</label>
    </ligand>
</feature>
<feature type="binding site" evidence="3">
    <location>
        <position position="247"/>
    </location>
    <ligand>
        <name>Ca(2+)</name>
        <dbReference type="ChEBI" id="CHEBI:29108"/>
        <label>2</label>
    </ligand>
</feature>
<feature type="binding site" evidence="3">
    <location>
        <position position="248"/>
    </location>
    <ligand>
        <name>Ca(2+)</name>
        <dbReference type="ChEBI" id="CHEBI:29108"/>
        <label>1</label>
    </ligand>
</feature>
<feature type="binding site" evidence="3">
    <location>
        <position position="248"/>
    </location>
    <ligand>
        <name>Ca(2+)</name>
        <dbReference type="ChEBI" id="CHEBI:29108"/>
        <label>2</label>
    </ligand>
</feature>
<feature type="binding site" evidence="3">
    <location>
        <position position="248"/>
    </location>
    <ligand>
        <name>Ca(2+)</name>
        <dbReference type="ChEBI" id="CHEBI:29108"/>
        <label>3</label>
    </ligand>
</feature>
<feature type="binding site" evidence="3">
    <location>
        <position position="252"/>
    </location>
    <ligand>
        <name>Ca(2+)</name>
        <dbReference type="ChEBI" id="CHEBI:29108"/>
        <label>3</label>
    </ligand>
</feature>
<feature type="binding site" evidence="3">
    <location>
        <position position="254"/>
    </location>
    <ligand>
        <name>Ca(2+)</name>
        <dbReference type="ChEBI" id="CHEBI:29108"/>
        <label>1</label>
    </ligand>
</feature>
<feature type="binding site" evidence="3">
    <location>
        <position position="254"/>
    </location>
    <ligand>
        <name>Ca(2+)</name>
        <dbReference type="ChEBI" id="CHEBI:29108"/>
        <label>3</label>
    </ligand>
</feature>
<feature type="binding site" evidence="8">
    <location>
        <begin position="345"/>
        <end position="353"/>
    </location>
    <ligand>
        <name>ATP</name>
        <dbReference type="ChEBI" id="CHEBI:30616"/>
    </ligand>
</feature>
<feature type="binding site" evidence="8">
    <location>
        <position position="368"/>
    </location>
    <ligand>
        <name>ATP</name>
        <dbReference type="ChEBI" id="CHEBI:30616"/>
    </ligand>
</feature>
<feature type="modified residue" description="N-acetylalanine" evidence="5">
    <location>
        <position position="2"/>
    </location>
</feature>
<feature type="modified residue" description="Phosphoserine" evidence="5">
    <location>
        <position position="10"/>
    </location>
</feature>
<feature type="modified residue" description="Phosphoserine" evidence="5">
    <location>
        <position position="226"/>
    </location>
</feature>
<feature type="modified residue" description="Phosphoserine" evidence="3">
    <location>
        <position position="319"/>
    </location>
</feature>
<feature type="modified residue" description="Phosphothreonine" evidence="2">
    <location>
        <position position="494"/>
    </location>
</feature>
<feature type="modified residue" description="Phosphothreonine" evidence="2">
    <location>
        <position position="495"/>
    </location>
</feature>
<feature type="modified residue" description="Phosphothreonine; by PDPK1" evidence="2">
    <location>
        <position position="497"/>
    </location>
</feature>
<feature type="modified residue" description="Phosphothreonine" evidence="4">
    <location>
        <position position="501"/>
    </location>
</feature>
<feature type="modified residue" description="N6-acetyllysine" evidence="5">
    <location>
        <position position="628"/>
    </location>
</feature>
<feature type="modified residue" description="Phosphothreonine" evidence="6">
    <location>
        <position position="631"/>
    </location>
</feature>
<feature type="modified residue" description="Phosphothreonine; by autocatalysis" evidence="5">
    <location>
        <position position="638"/>
    </location>
</feature>
<feature type="modified residue" description="Phosphoserine" evidence="5">
    <location>
        <position position="651"/>
    </location>
</feature>
<feature type="modified residue" description="Phosphoserine" evidence="4">
    <location>
        <position position="657"/>
    </location>
</feature>
<feature type="modified residue" description="Phosphotyrosine; by SYK" evidence="6">
    <location>
        <position position="658"/>
    </location>
</feature>
<sequence>MADVFPANDSTASQDVANRFARKGALRQKNVHEVKDHKFIARFFKQPTFCSHCTDFIWGFGKQGFQCQVCCFVVHKRCHEFVTFSCPGADKGPDTDDPRSKHKFKIHTYGSPTFCDHCGSLLYGLIHQGMKCDTCDMNVHKQCVINVPSLCGMDHTEKRGRIYLKAEVTDEKLHVTVRDAKNLIPMDPNGLSDPYVKLKLIPDPKNESKQKTKTIRSTLNPQWNESFTFKLKPSDKDRRLSVEIWDWDRTTRNDFMGSLSFGVSELMKMPASGWYKLLNQEEGEYYNVPIPEGDEDGNVELRQKFEKAKLGPAGNKVISPSEDRKQPSNNLDRVKLTDFNFLMVLGKGSFGKVMLADRKGTEELYAIKILKKDVVIQDDDVECTMVEKRVLALMDKPPFLTQLHSCFQTVDRLYFVMEYVNGGDLMYHIQQVGKFKEPQAVFYAAEISIGLFFLHKRGIIYRDLKLDNVMLDSEGHIKIADFGMCKEHMMDGVTTRTFCGTPDYIAPEIIAYQPYGKSVDWWAYGVLLYEMLAGQPPFDGEDEDELFQSIMEHNVSYPKSLSKEAVSICKGLMTKHPAKRLGCGPEGERDVREHAFFRRIDWEKLENREIQPPFKPKVCGKGAENFDKFFTRGQPVVTPPDQLVIANIDQSDFEGFSYVNPQFVHPILQSSV</sequence>
<comment type="function">
    <text evidence="5 6">Calcium-activated, phospholipid- and diacylglycerol (DAG)-dependent serine/threonine-protein kinase that is involved in positive and negative regulation of cell proliferation, apoptosis, differentiation, migration and adhesion, cardiac hypertrophy, angiogenesis, platelet function and inflammation, by directly phosphorylating targets such as RAF1, BCL2, CSPG4, TNNT2/CTNT, or activating signaling cascades involving MAPK1/3 (ERK1/2) and RAP1GAP. Depending on the cell type, is involved in cell proliferation and cell growth arrest by positive and negative regulation of the cell cycle. Can promote cell growth by phosphorylating and activating RAF1, which mediates the activation of the MAPK/ERK signaling cascade, and/or by up-regulating CDKN1A, which facilitates active cyclin-dependent kinase (CDK) complex formation. In cells stimulated by the phorbol ester PMA, can trigger a cell cycle arrest program which is associated with the accumulation of the hyper-phosphorylated growth-suppressive form of RB1 and induction of the CDK inhibitors CDKN1A and CDKN1B. Depending on the cell type, exhibits anti-apoptotic function and protects cells from apoptosis by suppressing the p53/TP53-mediated activation of IGFBP3, or mediates anti-apoptotic action by phosphorylating BCL2. During macrophage differentiation induced by macrophage colony-stimulating factor (CSF1), is translocated to the nucleus and is associated with macrophage development. After wounding, translocates from focal contacts to lamellipodia and participates in the modulation of desmosomal adhesion. Plays a role in cell motility by phosphorylating CSPG4, which induces association of CSPG4 with extensive lamellipodia at the cell periphery and polarization of the cell accompanied by increases in cell motility. During chemokine-induced CD4(+) T cell migration, phosphorylates CDC42-guanine exchange factor DOCK8 resulting in its dissociation from LRCH1 and the activation of GTPase CDC42. Negatively regulates myocardial contractility and positively regulates angiogenesis, platelet aggregation and thrombus formation in arteries. Mediates hypertrophic growth of neonatal cardiomyocytes, in part through a MAPK1/3 (ERK1/2)-dependent signaling pathway, and upon PMA treatment, is required to induce cardiomyocyte hypertrophy up to heart failure and death, by increasing protein synthesis, protein-DNA ratio and cell surface area. Regulates cardiomyocyte function by phosphorylating cardiac troponin T (TNNT2/CTNT), which induces significant reduction in actomyosin ATPase activity, myofilament calcium sensitivity and myocardial contractility. In angiogenesis, is required for full endothelial cell migration, adhesion to vitronectin (VTN), and vascular endothelial growth factor A (VEGFA)-dependent regulation of kinase activation and vascular tube formation. Involved in the stabilization of VEGFA mRNA at post-transcriptional level and mediates VEGFA-induced cell proliferation. In the regulation of calcium-induced platelet aggregation, mediates signals from the CD36/GP4 receptor for granule release, and activates the integrin heterodimer ITGA2B-ITGB3 through the RAP1GAP pathway for adhesion. During response to lipopolysaccharides (LPS), may regulate selective LPS-induced macrophage functions involved in host defense and inflammation. But in some inflammatory responses, may negatively regulate NF-kappa-B-induced genes, through IL1A-dependent induction of NF-kappa-B inhibitor alpha (NFKBIA/IKBA). Upon stimulation with 12-O-tetradecanoylphorbol-13-acetate (TPA), phosphorylates EIF4G1, which modulates EIF4G1 binding to MKNK1 and may be involved in the regulation of EIF4E phosphorylation. Phosphorylates KIT, leading to inhibition of KIT activity. Phosphorylates ATF2 which promotes cooperation between ATF2 and JUN, activating transcription. Phosphorylates SOCS2 at 'Ser-52' facilitating its ubiquitination and proteasomal degradation (By similarity). Phosphorylates KLHL3 in response to angiotensin II signaling, decreasing the interaction between KLHL3 and WNK4 (By similarity). Phosphorylates and activates LRRK1, which phosphorylates RAB proteins involved in intracellular trafficking (By similarity).</text>
</comment>
<comment type="catalytic activity">
    <reaction evidence="5">
        <text>L-seryl-[protein] + ATP = O-phospho-L-seryl-[protein] + ADP + H(+)</text>
        <dbReference type="Rhea" id="RHEA:17989"/>
        <dbReference type="Rhea" id="RHEA-COMP:9863"/>
        <dbReference type="Rhea" id="RHEA-COMP:11604"/>
        <dbReference type="ChEBI" id="CHEBI:15378"/>
        <dbReference type="ChEBI" id="CHEBI:29999"/>
        <dbReference type="ChEBI" id="CHEBI:30616"/>
        <dbReference type="ChEBI" id="CHEBI:83421"/>
        <dbReference type="ChEBI" id="CHEBI:456216"/>
        <dbReference type="EC" id="2.7.11.13"/>
    </reaction>
</comment>
<comment type="catalytic activity">
    <reaction evidence="5">
        <text>L-threonyl-[protein] + ATP = O-phospho-L-threonyl-[protein] + ADP + H(+)</text>
        <dbReference type="Rhea" id="RHEA:46608"/>
        <dbReference type="Rhea" id="RHEA-COMP:11060"/>
        <dbReference type="Rhea" id="RHEA-COMP:11605"/>
        <dbReference type="ChEBI" id="CHEBI:15378"/>
        <dbReference type="ChEBI" id="CHEBI:30013"/>
        <dbReference type="ChEBI" id="CHEBI:30616"/>
        <dbReference type="ChEBI" id="CHEBI:61977"/>
        <dbReference type="ChEBI" id="CHEBI:456216"/>
        <dbReference type="EC" id="2.7.11.13"/>
    </reaction>
</comment>
<comment type="cofactor">
    <cofactor evidence="7">
        <name>Ca(2+)</name>
        <dbReference type="ChEBI" id="CHEBI:29108"/>
    </cofactor>
    <text evidence="3">Binds 3 Ca(2+) ions per subunit. The ions are bound to the C2 domain.</text>
</comment>
<comment type="activity regulation">
    <text>Classical (or conventional) PKCs (PRKCA, PRKCB and PRKCG) are activated by calcium and diacylglycerol (DAG) in the presence of phosphatidylserine. Three specific sites; Thr-497 (activation loop of the kinase domain), Thr-638 (turn motif) and Ser-657 (hydrophobic region), need to be phosphorylated for its full activation.</text>
</comment>
<comment type="subunit">
    <text evidence="3 5 6">Interacts with ADAP1/CENTA1, CSPG4 and PRKCABP. Binds to CAVIN2 in the presence of phosphatidylserine. Interacts with PICK1 (via PDZ domain). Interacts with TRIM41. Recruited in a circadian manner into a nuclear complex which also includes BMAL1 and RACK1. Interacts with PARD3 (By similarity). Interacts with SOCS2 (By similarity).</text>
</comment>
<comment type="subcellular location">
    <subcellularLocation>
        <location evidence="1">Cytoplasm</location>
    </subcellularLocation>
    <subcellularLocation>
        <location evidence="1">Cell membrane</location>
        <topology evidence="1">Peripheral membrane protein</topology>
    </subcellularLocation>
    <subcellularLocation>
        <location evidence="1">Mitochondrion membrane</location>
        <topology evidence="1">Peripheral membrane protein</topology>
    </subcellularLocation>
    <subcellularLocation>
        <location evidence="1">Nucleus</location>
    </subcellularLocation>
</comment>
<comment type="PTM">
    <text evidence="5">In response to growth factors, phosphorylated at Thr-631 and Ser-657 by the mTORC2 complex, promoting autophosphorylation and activation of PRKCE.</text>
</comment>
<comment type="similarity">
    <text evidence="12">Belongs to the protein kinase superfamily. AGC Ser/Thr protein kinase family. PKC subfamily.</text>
</comment>
<evidence type="ECO:0000250" key="1"/>
<evidence type="ECO:0000250" key="2">
    <source>
        <dbReference type="UniProtKB" id="P04409"/>
    </source>
</evidence>
<evidence type="ECO:0000250" key="3">
    <source>
        <dbReference type="UniProtKB" id="P05696"/>
    </source>
</evidence>
<evidence type="ECO:0000250" key="4">
    <source>
        <dbReference type="UniProtKB" id="P05771"/>
    </source>
</evidence>
<evidence type="ECO:0000250" key="5">
    <source>
        <dbReference type="UniProtKB" id="P17252"/>
    </source>
</evidence>
<evidence type="ECO:0000250" key="6">
    <source>
        <dbReference type="UniProtKB" id="P20444"/>
    </source>
</evidence>
<evidence type="ECO:0000255" key="7">
    <source>
        <dbReference type="PROSITE-ProRule" id="PRU00041"/>
    </source>
</evidence>
<evidence type="ECO:0000255" key="8">
    <source>
        <dbReference type="PROSITE-ProRule" id="PRU00159"/>
    </source>
</evidence>
<evidence type="ECO:0000255" key="9">
    <source>
        <dbReference type="PROSITE-ProRule" id="PRU00226"/>
    </source>
</evidence>
<evidence type="ECO:0000255" key="10">
    <source>
        <dbReference type="PROSITE-ProRule" id="PRU00618"/>
    </source>
</evidence>
<evidence type="ECO:0000255" key="11">
    <source>
        <dbReference type="PROSITE-ProRule" id="PRU10027"/>
    </source>
</evidence>
<evidence type="ECO:0000305" key="12"/>
<name>KPCA_RABIT</name>
<keyword id="KW-0007">Acetylation</keyword>
<keyword id="KW-0037">Angiogenesis</keyword>
<keyword id="KW-0053">Apoptosis</keyword>
<keyword id="KW-0067">ATP-binding</keyword>
<keyword id="KW-0106">Calcium</keyword>
<keyword id="KW-0130">Cell adhesion</keyword>
<keyword id="KW-1003">Cell membrane</keyword>
<keyword id="KW-0963">Cytoplasm</keyword>
<keyword id="KW-0418">Kinase</keyword>
<keyword id="KW-0472">Membrane</keyword>
<keyword id="KW-0479">Metal-binding</keyword>
<keyword id="KW-0496">Mitochondrion</keyword>
<keyword id="KW-0547">Nucleotide-binding</keyword>
<keyword id="KW-0539">Nucleus</keyword>
<keyword id="KW-0597">Phosphoprotein</keyword>
<keyword id="KW-1185">Reference proteome</keyword>
<keyword id="KW-0677">Repeat</keyword>
<keyword id="KW-0723">Serine/threonine-protein kinase</keyword>
<keyword id="KW-0808">Transferase</keyword>
<keyword id="KW-0862">Zinc</keyword>
<keyword id="KW-0863">Zinc-finger</keyword>
<accession>P10102</accession>
<proteinExistence type="evidence at transcript level"/>
<reference key="1">
    <citation type="journal article" date="1987" name="Nature">
        <title>Tissue-specific expression of three distinct types of rabbit protein kinase C.</title>
        <authorList>
            <person name="Ohno S."/>
            <person name="Kawasaki H."/>
            <person name="Imajoh S."/>
            <person name="Suzuki K."/>
            <person name="Inagaki M."/>
            <person name="Yokokura H."/>
            <person name="Sakoh T."/>
            <person name="Hidaka H."/>
        </authorList>
    </citation>
    <scope>NUCLEOTIDE SEQUENCE [MRNA]</scope>
    <source>
        <tissue>Brain</tissue>
    </source>
</reference>
<reference key="2">
    <citation type="journal article" date="1988" name="Nature">
        <title>The molecular heterogeneity of protein kinase C and its implications for cellular regulation.</title>
        <authorList>
            <person name="Nishizuka Y."/>
        </authorList>
    </citation>
    <scope>REVIEW</scope>
</reference>
<organism>
    <name type="scientific">Oryctolagus cuniculus</name>
    <name type="common">Rabbit</name>
    <dbReference type="NCBI Taxonomy" id="9986"/>
    <lineage>
        <taxon>Eukaryota</taxon>
        <taxon>Metazoa</taxon>
        <taxon>Chordata</taxon>
        <taxon>Craniata</taxon>
        <taxon>Vertebrata</taxon>
        <taxon>Euteleostomi</taxon>
        <taxon>Mammalia</taxon>
        <taxon>Eutheria</taxon>
        <taxon>Euarchontoglires</taxon>
        <taxon>Glires</taxon>
        <taxon>Lagomorpha</taxon>
        <taxon>Leporidae</taxon>
        <taxon>Oryctolagus</taxon>
    </lineage>
</organism>